<sequence length="286" mass="31485">MGAPKQRWTSEEEAALRAGVARHGVGNWRMILNDPELSSTLRYRSNVDLKDKWRNMNVIVTSSSTRDRGRTSTRRTRAAPKNNDQLLAMSTITSEVDDEIVDVKPIVSMSVEGWNTSNSKKSHSRLDNIIMEAIKNLNEPTGSHRTTIANYIEEQYWPPSDFDHLLSAKLKYLATSGKLLKVNRKYRIAPSLLEDVQREPLKLGSDASRTLTRSQVDAELVRMATMTVEAAAAAAAHAVAEAEAIMAEAEAAAREAEAAEAEARAAQAFAEAAVLTLKNRNAAKLV</sequence>
<feature type="chain" id="PRO_0000429017" description="Single myb histone 5">
    <location>
        <begin position="1"/>
        <end position="286"/>
    </location>
</feature>
<feature type="domain" description="HTH myb-type" evidence="3">
    <location>
        <begin position="1"/>
        <end position="61"/>
    </location>
</feature>
<feature type="domain" description="H15" evidence="4">
    <location>
        <begin position="122"/>
        <end position="190"/>
    </location>
</feature>
<feature type="DNA-binding region" description="H-T-H motif" evidence="3">
    <location>
        <begin position="28"/>
        <end position="57"/>
    </location>
</feature>
<feature type="coiled-coil region" evidence="2">
    <location>
        <begin position="229"/>
        <end position="277"/>
    </location>
</feature>
<feature type="sequence conflict" description="In Ref. 2; ACG34838." evidence="5" ref="2">
    <original>S</original>
    <variation>N</variation>
    <location>
        <position position="90"/>
    </location>
</feature>
<accession>Q6WLH3</accession>
<accession>B6TCK5</accession>
<evidence type="ECO:0000250" key="1"/>
<evidence type="ECO:0000255" key="2"/>
<evidence type="ECO:0000255" key="3">
    <source>
        <dbReference type="PROSITE-ProRule" id="PRU00625"/>
    </source>
</evidence>
<evidence type="ECO:0000255" key="4">
    <source>
        <dbReference type="PROSITE-ProRule" id="PRU00837"/>
    </source>
</evidence>
<evidence type="ECO:0000305" key="5"/>
<protein>
    <recommendedName>
        <fullName>Single myb histone 5</fullName>
    </recommendedName>
    <alternativeName>
        <fullName>Protein SINGLE MYB HISTONE5</fullName>
    </alternativeName>
</protein>
<comment type="function">
    <text evidence="1">Binds preferentially double-stranded telomeric repeats, but may also bind to the single telomeric strand.</text>
</comment>
<comment type="subunit">
    <text evidence="1">Forms a homodimer and heterodimers.</text>
</comment>
<comment type="subcellular location">
    <subcellularLocation>
        <location evidence="3 4">Nucleus</location>
    </subcellularLocation>
    <subcellularLocation>
        <location evidence="4">Chromosome</location>
    </subcellularLocation>
    <subcellularLocation>
        <location evidence="1">Nucleus</location>
        <location evidence="1">Nucleolus</location>
    </subcellularLocation>
    <subcellularLocation>
        <location evidence="5">Chromosome</location>
        <location evidence="5">Telomere</location>
    </subcellularLocation>
    <text evidence="1">Localized to the nucleolus during interphase.</text>
</comment>
<comment type="domain">
    <text evidence="1">HTH myb-type domain confers double-stranded telomeric DNA-binding while the H15 domain is involved in non-specific DNA-protein interaction and multimerization.</text>
</comment>
<comment type="similarity">
    <text evidence="4">Belongs to the histone H1/H5 family. SMH subfamily.</text>
</comment>
<reference key="1">
    <citation type="journal article" date="2003" name="Plant Physiol.">
        <title>The maize Single myb histone 1 gene, Smh1, belongs to a novel gene family and encodes a protein that binds telomere DNA repeats in vitro.</title>
        <authorList>
            <person name="Marian C.O."/>
            <person name="Bordoli S.J."/>
            <person name="Goltz M."/>
            <person name="Santarella R.A."/>
            <person name="Jackson L.P."/>
            <person name="Danilevskaya O."/>
            <person name="Beckstette M."/>
            <person name="Meeley R."/>
            <person name="Bass H.W."/>
        </authorList>
    </citation>
    <scope>NUCLEOTIDE SEQUENCE [MRNA]</scope>
    <scope>GENE FAMILY</scope>
    <scope>NOMENCLATURE</scope>
    <source>
        <tissue>Embryo</tissue>
    </source>
</reference>
<reference key="2">
    <citation type="journal article" date="2009" name="Plant Mol. Biol.">
        <title>Insights into corn genes derived from large-scale cDNA sequencing.</title>
        <authorList>
            <person name="Alexandrov N.N."/>
            <person name="Brover V.V."/>
            <person name="Freidin S."/>
            <person name="Troukhan M.E."/>
            <person name="Tatarinova T.V."/>
            <person name="Zhang H."/>
            <person name="Swaller T.J."/>
            <person name="Lu Y.-P."/>
            <person name="Bouck J."/>
            <person name="Flavell R.B."/>
            <person name="Feldmann K.A."/>
        </authorList>
    </citation>
    <scope>NUCLEOTIDE SEQUENCE [LARGE SCALE MRNA]</scope>
</reference>
<reference key="3">
    <citation type="journal article" date="2009" name="PLoS Genet.">
        <title>Sequencing, mapping, and analysis of 27,455 maize full-length cDNAs.</title>
        <authorList>
            <person name="Soderlund C."/>
            <person name="Descour A."/>
            <person name="Kudrna D."/>
            <person name="Bomhoff M."/>
            <person name="Boyd L."/>
            <person name="Currie J."/>
            <person name="Angelova A."/>
            <person name="Collura K."/>
            <person name="Wissotski M."/>
            <person name="Ashley E."/>
            <person name="Morrow D."/>
            <person name="Fernandes J."/>
            <person name="Walbot V."/>
            <person name="Yu Y."/>
        </authorList>
    </citation>
    <scope>NUCLEOTIDE SEQUENCE [LARGE SCALE MRNA]</scope>
    <source>
        <strain>cv. B73</strain>
    </source>
</reference>
<organism>
    <name type="scientific">Zea mays</name>
    <name type="common">Maize</name>
    <dbReference type="NCBI Taxonomy" id="4577"/>
    <lineage>
        <taxon>Eukaryota</taxon>
        <taxon>Viridiplantae</taxon>
        <taxon>Streptophyta</taxon>
        <taxon>Embryophyta</taxon>
        <taxon>Tracheophyta</taxon>
        <taxon>Spermatophyta</taxon>
        <taxon>Magnoliopsida</taxon>
        <taxon>Liliopsida</taxon>
        <taxon>Poales</taxon>
        <taxon>Poaceae</taxon>
        <taxon>PACMAD clade</taxon>
        <taxon>Panicoideae</taxon>
        <taxon>Andropogonodae</taxon>
        <taxon>Andropogoneae</taxon>
        <taxon>Tripsacinae</taxon>
        <taxon>Zea</taxon>
    </lineage>
</organism>
<proteinExistence type="evidence at transcript level"/>
<keyword id="KW-0158">Chromosome</keyword>
<keyword id="KW-0175">Coiled coil</keyword>
<keyword id="KW-0238">DNA-binding</keyword>
<keyword id="KW-0539">Nucleus</keyword>
<keyword id="KW-1185">Reference proteome</keyword>
<keyword id="KW-0779">Telomere</keyword>
<keyword id="KW-0804">Transcription</keyword>
<keyword id="KW-0805">Transcription regulation</keyword>
<gene>
    <name type="primary">SMH5</name>
</gene>
<name>SMH5_MAIZE</name>
<dbReference type="EMBL" id="AY280630">
    <property type="protein sequence ID" value="AAQ62067.1"/>
    <property type="molecule type" value="mRNA"/>
</dbReference>
<dbReference type="EMBL" id="EU962720">
    <property type="protein sequence ID" value="ACG34838.1"/>
    <property type="molecule type" value="mRNA"/>
</dbReference>
<dbReference type="EMBL" id="BT037297">
    <property type="protein sequence ID" value="ACF82302.1"/>
    <property type="molecule type" value="mRNA"/>
</dbReference>
<dbReference type="EMBL" id="BT086212">
    <property type="protein sequence ID" value="ACR36565.1"/>
    <property type="molecule type" value="mRNA"/>
</dbReference>
<dbReference type="RefSeq" id="NP_001105226.1">
    <property type="nucleotide sequence ID" value="NM_001111756.1"/>
</dbReference>
<dbReference type="RefSeq" id="XP_008673421.1">
    <property type="nucleotide sequence ID" value="XM_008675199.1"/>
</dbReference>
<dbReference type="SMR" id="Q6WLH3"/>
<dbReference type="FunCoup" id="Q6WLH3">
    <property type="interactions" value="2707"/>
</dbReference>
<dbReference type="STRING" id="4577.Q6WLH3"/>
<dbReference type="PaxDb" id="4577-GRMZM2G163291_P02"/>
<dbReference type="EnsemblPlants" id="Zm00001eb123510_T001">
    <property type="protein sequence ID" value="Zm00001eb123510_P001"/>
    <property type="gene ID" value="Zm00001eb123510"/>
</dbReference>
<dbReference type="EnsemblPlants" id="Zm00001eb123510_T003">
    <property type="protein sequence ID" value="Zm00001eb123510_P003"/>
    <property type="gene ID" value="Zm00001eb123510"/>
</dbReference>
<dbReference type="GeneID" id="542124"/>
<dbReference type="Gramene" id="Zm00001eb123510_T001">
    <property type="protein sequence ID" value="Zm00001eb123510_P001"/>
    <property type="gene ID" value="Zm00001eb123510"/>
</dbReference>
<dbReference type="Gramene" id="Zm00001eb123510_T003">
    <property type="protein sequence ID" value="Zm00001eb123510_P003"/>
    <property type="gene ID" value="Zm00001eb123510"/>
</dbReference>
<dbReference type="KEGG" id="zma:542124"/>
<dbReference type="eggNOG" id="ENOG502QSU2">
    <property type="taxonomic scope" value="Eukaryota"/>
</dbReference>
<dbReference type="HOGENOM" id="CLU_047477_0_1_1"/>
<dbReference type="InParanoid" id="Q6WLH3"/>
<dbReference type="OMA" id="NRTSIAM"/>
<dbReference type="OrthoDB" id="608866at2759"/>
<dbReference type="Proteomes" id="UP000007305">
    <property type="component" value="Chromosome 3"/>
</dbReference>
<dbReference type="ExpressionAtlas" id="Q6WLH3">
    <property type="expression patterns" value="baseline and differential"/>
</dbReference>
<dbReference type="GO" id="GO:0000785">
    <property type="term" value="C:chromatin"/>
    <property type="evidence" value="ECO:0000250"/>
    <property type="project" value="UniProtKB"/>
</dbReference>
<dbReference type="GO" id="GO:0000781">
    <property type="term" value="C:chromosome, telomeric region"/>
    <property type="evidence" value="ECO:0007669"/>
    <property type="project" value="UniProtKB-SubCell"/>
</dbReference>
<dbReference type="GO" id="GO:0005730">
    <property type="term" value="C:nucleolus"/>
    <property type="evidence" value="ECO:0000250"/>
    <property type="project" value="UniProtKB"/>
</dbReference>
<dbReference type="GO" id="GO:0000786">
    <property type="term" value="C:nucleosome"/>
    <property type="evidence" value="ECO:0007669"/>
    <property type="project" value="InterPro"/>
</dbReference>
<dbReference type="GO" id="GO:0005634">
    <property type="term" value="C:nucleus"/>
    <property type="evidence" value="ECO:0000250"/>
    <property type="project" value="UniProtKB"/>
</dbReference>
<dbReference type="GO" id="GO:0003691">
    <property type="term" value="F:double-stranded telomeric DNA binding"/>
    <property type="evidence" value="ECO:0000250"/>
    <property type="project" value="UniProtKB"/>
</dbReference>
<dbReference type="GO" id="GO:0042803">
    <property type="term" value="F:protein homodimerization activity"/>
    <property type="evidence" value="ECO:0000250"/>
    <property type="project" value="UniProtKB"/>
</dbReference>
<dbReference type="GO" id="GO:0043047">
    <property type="term" value="F:single-stranded telomeric DNA binding"/>
    <property type="evidence" value="ECO:0000250"/>
    <property type="project" value="UniProtKB"/>
</dbReference>
<dbReference type="GO" id="GO:0006334">
    <property type="term" value="P:nucleosome assembly"/>
    <property type="evidence" value="ECO:0007669"/>
    <property type="project" value="InterPro"/>
</dbReference>
<dbReference type="CDD" id="cd11660">
    <property type="entry name" value="SANT_TRF"/>
    <property type="match status" value="1"/>
</dbReference>
<dbReference type="FunFam" id="1.10.10.10:FF:000498">
    <property type="entry name" value="Telomere repeat-binding factor 1"/>
    <property type="match status" value="1"/>
</dbReference>
<dbReference type="FunFam" id="1.10.10.60:FF:000168">
    <property type="entry name" value="Telomere repeat-binding factor 1"/>
    <property type="match status" value="1"/>
</dbReference>
<dbReference type="FunFam" id="1.10.246.220:FF:000002">
    <property type="entry name" value="Telomere repeat-binding factor 1"/>
    <property type="match status" value="1"/>
</dbReference>
<dbReference type="Gene3D" id="1.10.246.220">
    <property type="match status" value="1"/>
</dbReference>
<dbReference type="Gene3D" id="1.10.10.10">
    <property type="entry name" value="Winged helix-like DNA-binding domain superfamily/Winged helix DNA-binding domain"/>
    <property type="match status" value="1"/>
</dbReference>
<dbReference type="InterPro" id="IPR005818">
    <property type="entry name" value="Histone_H1/H5_H15"/>
</dbReference>
<dbReference type="InterPro" id="IPR009057">
    <property type="entry name" value="Homeodomain-like_sf"/>
</dbReference>
<dbReference type="InterPro" id="IPR017930">
    <property type="entry name" value="Myb_dom"/>
</dbReference>
<dbReference type="InterPro" id="IPR001005">
    <property type="entry name" value="SANT/Myb"/>
</dbReference>
<dbReference type="InterPro" id="IPR044597">
    <property type="entry name" value="SMH1-6"/>
</dbReference>
<dbReference type="InterPro" id="IPR036388">
    <property type="entry name" value="WH-like_DNA-bd_sf"/>
</dbReference>
<dbReference type="InterPro" id="IPR036390">
    <property type="entry name" value="WH_DNA-bd_sf"/>
</dbReference>
<dbReference type="PANTHER" id="PTHR46267">
    <property type="entry name" value="SINGLE MYB HISTONE 4"/>
    <property type="match status" value="1"/>
</dbReference>
<dbReference type="PANTHER" id="PTHR46267:SF25">
    <property type="entry name" value="SINGLE MYB HISTONE 5"/>
    <property type="match status" value="1"/>
</dbReference>
<dbReference type="Pfam" id="PF00538">
    <property type="entry name" value="Linker_histone"/>
    <property type="match status" value="1"/>
</dbReference>
<dbReference type="Pfam" id="PF00249">
    <property type="entry name" value="Myb_DNA-binding"/>
    <property type="match status" value="1"/>
</dbReference>
<dbReference type="SMART" id="SM00526">
    <property type="entry name" value="H15"/>
    <property type="match status" value="1"/>
</dbReference>
<dbReference type="SMART" id="SM00717">
    <property type="entry name" value="SANT"/>
    <property type="match status" value="1"/>
</dbReference>
<dbReference type="SUPFAM" id="SSF46689">
    <property type="entry name" value="Homeodomain-like"/>
    <property type="match status" value="1"/>
</dbReference>
<dbReference type="SUPFAM" id="SSF46785">
    <property type="entry name" value="Winged helix' DNA-binding domain"/>
    <property type="match status" value="1"/>
</dbReference>
<dbReference type="PROSITE" id="PS51504">
    <property type="entry name" value="H15"/>
    <property type="match status" value="1"/>
</dbReference>
<dbReference type="PROSITE" id="PS51294">
    <property type="entry name" value="HTH_MYB"/>
    <property type="match status" value="1"/>
</dbReference>